<sequence>MASTTSVRQFSTSGSVKGLCAPGMGFSRMSSVRVGGACRAPSLLGGGSCGNMSVTSSRFSAGLGGGYGGGYTCSLGGGFGSSFGVSDALLGGSEKETMQNLNDRLATYLDRVRALEEANADLEVKIREWYKKQGPGPARDYSPYFKTIEDLRNKILAATIDNASIVLQIDNARLAADDFRTKYETELNLRMSVEADINGLRRVLDELTLARADLEMQIESLKEELAYLRKNHEEEMNALRGQVGGDVNVEMDAAPGVDLSRILNEMRDQYEKMAEKNRKDAEEWFFTKTEELNREVATNTEALQSSRTEITELRRSVQNLEIELQSQLSMKASLENSLAETEARYGAQLAQLQGLISSVEQQLCELRCDMERQNHEYQVLLDVKTRLEQEIATYRRLLEGEDAHLATQYSSSLASQPSREGMVTSRQVRTIVEEVQDGKVVSSREQVHRSTH</sequence>
<organism>
    <name type="scientific">Mus musculus</name>
    <name type="common">Mouse</name>
    <dbReference type="NCBI Taxonomy" id="10090"/>
    <lineage>
        <taxon>Eukaryota</taxon>
        <taxon>Metazoa</taxon>
        <taxon>Chordata</taxon>
        <taxon>Craniata</taxon>
        <taxon>Vertebrata</taxon>
        <taxon>Euteleostomi</taxon>
        <taxon>Mammalia</taxon>
        <taxon>Eutheria</taxon>
        <taxon>Euarchontoglires</taxon>
        <taxon>Glires</taxon>
        <taxon>Rodentia</taxon>
        <taxon>Myomorpha</taxon>
        <taxon>Muroidea</taxon>
        <taxon>Muridae</taxon>
        <taxon>Murinae</taxon>
        <taxon>Mus</taxon>
        <taxon>Mus</taxon>
    </lineage>
</organism>
<reference evidence="4 6" key="1">
    <citation type="journal article" date="2004" name="J. Invest. Dermatol.">
        <title>A novel mouse type I intermediate filament gene, keratin 17n (K17n), exhibits preferred expression in nail tissue.</title>
        <authorList>
            <person name="Tong X."/>
            <person name="Coulombe P.A."/>
        </authorList>
    </citation>
    <scope>NUCLEOTIDE SEQUENCE [MRNA]</scope>
    <scope>SUBUNIT</scope>
    <scope>SUBCELLULAR LOCATION</scope>
    <scope>TISSUE SPECIFICITY</scope>
    <source>
        <strain evidence="6">C57BL/6J</strain>
    </source>
</reference>
<reference key="2">
    <citation type="journal article" date="2009" name="PLoS Biol.">
        <title>Lineage-specific biology revealed by a finished genome assembly of the mouse.</title>
        <authorList>
            <person name="Church D.M."/>
            <person name="Goodstadt L."/>
            <person name="Hillier L.W."/>
            <person name="Zody M.C."/>
            <person name="Goldstein S."/>
            <person name="She X."/>
            <person name="Bult C.J."/>
            <person name="Agarwala R."/>
            <person name="Cherry J.L."/>
            <person name="DiCuccio M."/>
            <person name="Hlavina W."/>
            <person name="Kapustin Y."/>
            <person name="Meric P."/>
            <person name="Maglott D."/>
            <person name="Birtle Z."/>
            <person name="Marques A.C."/>
            <person name="Graves T."/>
            <person name="Zhou S."/>
            <person name="Teague B."/>
            <person name="Potamousis K."/>
            <person name="Churas C."/>
            <person name="Place M."/>
            <person name="Herschleb J."/>
            <person name="Runnheim R."/>
            <person name="Forrest D."/>
            <person name="Amos-Landgraf J."/>
            <person name="Schwartz D.C."/>
            <person name="Cheng Z."/>
            <person name="Lindblad-Toh K."/>
            <person name="Eichler E.E."/>
            <person name="Ponting C.P."/>
        </authorList>
    </citation>
    <scope>NUCLEOTIDE SEQUENCE [LARGE SCALE GENOMIC DNA]</scope>
    <source>
        <strain>C57BL/6J</strain>
    </source>
</reference>
<reference evidence="5" key="3">
    <citation type="journal article" date="2004" name="Genome Res.">
        <title>The status, quality, and expansion of the NIH full-length cDNA project: the Mammalian Gene Collection (MGC).</title>
        <authorList>
            <consortium name="The MGC Project Team"/>
        </authorList>
    </citation>
    <scope>NUCLEOTIDE SEQUENCE [LARGE SCALE MRNA]</scope>
</reference>
<reference evidence="7" key="4">
    <citation type="submission" date="2009-01" db="UniProtKB">
        <authorList>
            <person name="Lubec G."/>
            <person name="Sunyer B."/>
            <person name="Chen W.-Q."/>
        </authorList>
    </citation>
    <scope>PROTEIN SEQUENCE OF 114-125; 174-180 AND 387-395</scope>
    <scope>IDENTIFICATION BY MASS SPECTROMETRY</scope>
    <source>
        <strain>OF1</strain>
        <tissue>Hippocampus</tissue>
    </source>
</reference>
<reference evidence="4 8" key="5">
    <citation type="journal article" date="2004" name="Eur. J. Cell Biol.">
        <title>Comprehensive analysis of keratin gene clusters in humans and rodents.</title>
        <authorList>
            <person name="Hesse M."/>
            <person name="Zimek A."/>
            <person name="Weber K."/>
            <person name="Magin T.M."/>
        </authorList>
    </citation>
    <scope>IDENTIFICATION</scope>
</reference>
<reference key="6">
    <citation type="journal article" date="2010" name="Cell">
        <title>A tissue-specific atlas of mouse protein phosphorylation and expression.</title>
        <authorList>
            <person name="Huttlin E.L."/>
            <person name="Jedrychowski M.P."/>
            <person name="Elias J.E."/>
            <person name="Goswami T."/>
            <person name="Rad R."/>
            <person name="Beausoleil S.A."/>
            <person name="Villen J."/>
            <person name="Haas W."/>
            <person name="Sowa M.E."/>
            <person name="Gygi S.P."/>
        </authorList>
    </citation>
    <scope>IDENTIFICATION BY MASS SPECTROMETRY [LARGE SCALE ANALYSIS]</scope>
    <source>
        <tissue>Brain</tissue>
        <tissue>Brown adipose tissue</tissue>
        <tissue>Heart</tissue>
        <tissue>Kidney</tissue>
        <tissue>Liver</tissue>
        <tissue>Lung</tissue>
        <tissue>Pancreas</tissue>
        <tissue>Spleen</tissue>
        <tissue>Testis</tissue>
    </source>
</reference>
<feature type="chain" id="PRO_0000311714" description="Keratin, type I cytoskeletal 42">
    <location>
        <begin position="1"/>
        <end position="452"/>
    </location>
</feature>
<feature type="domain" description="IF rod" evidence="2">
    <location>
        <begin position="94"/>
        <end position="405"/>
    </location>
</feature>
<feature type="region of interest" description="Head" evidence="1">
    <location>
        <begin position="4"/>
        <end position="93"/>
    </location>
</feature>
<feature type="region of interest" description="Coil 1A" evidence="1">
    <location>
        <begin position="94"/>
        <end position="129"/>
    </location>
</feature>
<feature type="region of interest" description="Linker 1" evidence="1">
    <location>
        <begin position="130"/>
        <end position="147"/>
    </location>
</feature>
<feature type="region of interest" description="Coil 1B" evidence="1">
    <location>
        <begin position="148"/>
        <end position="239"/>
    </location>
</feature>
<feature type="region of interest" description="Linker 12" evidence="1">
    <location>
        <begin position="240"/>
        <end position="262"/>
    </location>
</feature>
<feature type="region of interest" description="Coil 2" evidence="1">
    <location>
        <begin position="263"/>
        <end position="401"/>
    </location>
</feature>
<feature type="region of interest" description="Tail" evidence="1">
    <location>
        <begin position="402"/>
        <end position="452"/>
    </location>
</feature>
<feature type="sequence conflict" description="In Ref. 1; AAR22526 and 3; AAI48205." evidence="4" ref="1 3">
    <original>A</original>
    <variation>D</variation>
    <location>
        <position position="2"/>
    </location>
</feature>
<feature type="sequence conflict" description="In Ref. 3; AAI12372/AAI48205." evidence="4" ref="3">
    <original>A</original>
    <variation>S</variation>
    <location>
        <position position="163"/>
    </location>
</feature>
<feature type="sequence conflict" description="In Ref. 3; AAI12372." evidence="4" ref="3">
    <original>A</original>
    <variation>V</variation>
    <location>
        <position position="274"/>
    </location>
</feature>
<protein>
    <recommendedName>
        <fullName>Keratin, type I cytoskeletal 42</fullName>
    </recommendedName>
    <alternativeName>
        <fullName>Cytokeratin-42</fullName>
        <shortName>CK-42</shortName>
    </alternativeName>
    <alternativeName>
        <fullName>Keratin-17n</fullName>
    </alternativeName>
    <alternativeName>
        <fullName>Keratin-42</fullName>
        <shortName>K42</shortName>
    </alternativeName>
    <alternativeName>
        <fullName>Type I keratin Ka22</fullName>
    </alternativeName>
</protein>
<accession>Q6IFX2</accession>
<accession>A7MAW4</accession>
<accession>Q2M1G8</accession>
<accession>Q6SEK1</accession>
<name>K1C42_MOUSE</name>
<evidence type="ECO:0000255" key="1"/>
<evidence type="ECO:0000255" key="2">
    <source>
        <dbReference type="PROSITE-ProRule" id="PRU01188"/>
    </source>
</evidence>
<evidence type="ECO:0000269" key="3">
    <source>
    </source>
</evidence>
<evidence type="ECO:0000305" key="4"/>
<evidence type="ECO:0000312" key="5">
    <source>
        <dbReference type="EMBL" id="AAI48205.1"/>
    </source>
</evidence>
<evidence type="ECO:0000312" key="6">
    <source>
        <dbReference type="EMBL" id="AAR22526.1"/>
    </source>
</evidence>
<evidence type="ECO:0000312" key="7">
    <source>
        <dbReference type="EMBL" id="CAM17782.1"/>
    </source>
</evidence>
<evidence type="ECO:0000312" key="8">
    <source>
        <dbReference type="EMBL" id="DAA04491.1"/>
    </source>
</evidence>
<evidence type="ECO:0000312" key="9">
    <source>
        <dbReference type="MGI" id="MGI:1915489"/>
    </source>
</evidence>
<gene>
    <name evidence="9" type="primary">Krt42</name>
    <name evidence="8" type="synonym">Ka22</name>
</gene>
<keyword id="KW-0175">Coiled coil</keyword>
<keyword id="KW-0963">Cytoplasm</keyword>
<keyword id="KW-0903">Direct protein sequencing</keyword>
<keyword id="KW-0403">Intermediate filament</keyword>
<keyword id="KW-0416">Keratin</keyword>
<keyword id="KW-1185">Reference proteome</keyword>
<proteinExistence type="evidence at protein level"/>
<dbReference type="EMBL" id="AY459292">
    <property type="protein sequence ID" value="AAR22526.1"/>
    <property type="molecule type" value="mRNA"/>
</dbReference>
<dbReference type="EMBL" id="AL590873">
    <property type="protein sequence ID" value="CAM17782.1"/>
    <property type="molecule type" value="Genomic_DNA"/>
</dbReference>
<dbReference type="EMBL" id="BC112371">
    <property type="protein sequence ID" value="AAI12372.1"/>
    <property type="molecule type" value="mRNA"/>
</dbReference>
<dbReference type="EMBL" id="BC148204">
    <property type="protein sequence ID" value="AAI48205.1"/>
    <property type="molecule type" value="mRNA"/>
</dbReference>
<dbReference type="EMBL" id="BK004025">
    <property type="protein sequence ID" value="DAA04491.1"/>
    <property type="molecule type" value="mRNA"/>
</dbReference>
<dbReference type="CCDS" id="CCDS25416.1"/>
<dbReference type="RefSeq" id="NP_997648.2">
    <property type="nucleotide sequence ID" value="NM_212483.3"/>
</dbReference>
<dbReference type="SMR" id="Q6IFX2"/>
<dbReference type="BioGRID" id="212755">
    <property type="interactions" value="12"/>
</dbReference>
<dbReference type="FunCoup" id="Q6IFX2">
    <property type="interactions" value="147"/>
</dbReference>
<dbReference type="IntAct" id="Q6IFX2">
    <property type="interactions" value="1"/>
</dbReference>
<dbReference type="STRING" id="10090.ENSMUSP00000017270"/>
<dbReference type="GlyGen" id="Q6IFX2">
    <property type="glycosylation" value="1 site, 1 O-linked glycan (1 site)"/>
</dbReference>
<dbReference type="iPTMnet" id="Q6IFX2"/>
<dbReference type="PhosphoSitePlus" id="Q6IFX2"/>
<dbReference type="SwissPalm" id="Q6IFX2"/>
<dbReference type="CPTAC" id="non-CPTAC-3921"/>
<dbReference type="jPOST" id="Q6IFX2"/>
<dbReference type="PaxDb" id="10090-ENSMUSP00000017270"/>
<dbReference type="PeptideAtlas" id="Q6IFX2"/>
<dbReference type="ProteomicsDB" id="268939"/>
<dbReference type="DNASU" id="68239"/>
<dbReference type="Ensembl" id="ENSMUST00000017270.8">
    <property type="protein sequence ID" value="ENSMUSP00000017270.7"/>
    <property type="gene ID" value="ENSMUSG00000053654.8"/>
</dbReference>
<dbReference type="GeneID" id="68239"/>
<dbReference type="KEGG" id="mmu:68239"/>
<dbReference type="UCSC" id="uc007lku.1">
    <property type="organism name" value="mouse"/>
</dbReference>
<dbReference type="AGR" id="MGI:1915489"/>
<dbReference type="CTD" id="68239"/>
<dbReference type="MGI" id="MGI:1915489">
    <property type="gene designation" value="Krt42"/>
</dbReference>
<dbReference type="VEuPathDB" id="HostDB:ENSMUSG00000053654"/>
<dbReference type="eggNOG" id="ENOG502QTM6">
    <property type="taxonomic scope" value="Eukaryota"/>
</dbReference>
<dbReference type="GeneTree" id="ENSGT00940000163247"/>
<dbReference type="HOGENOM" id="CLU_012560_8_1_1"/>
<dbReference type="InParanoid" id="Q6IFX2"/>
<dbReference type="OMA" id="TDMREQY"/>
<dbReference type="OrthoDB" id="2441647at2759"/>
<dbReference type="PhylomeDB" id="Q6IFX2"/>
<dbReference type="TreeFam" id="TF332742"/>
<dbReference type="BioGRID-ORCS" id="68239">
    <property type="hits" value="1 hit in 76 CRISPR screens"/>
</dbReference>
<dbReference type="PRO" id="PR:Q6IFX2"/>
<dbReference type="Proteomes" id="UP000000589">
    <property type="component" value="Chromosome 11"/>
</dbReference>
<dbReference type="RNAct" id="Q6IFX2">
    <property type="molecule type" value="protein"/>
</dbReference>
<dbReference type="Bgee" id="ENSMUSG00000053654">
    <property type="expression patterns" value="Expressed in epithelium of stomach and 170 other cell types or tissues"/>
</dbReference>
<dbReference type="GO" id="GO:0005737">
    <property type="term" value="C:cytoplasm"/>
    <property type="evidence" value="ECO:0007669"/>
    <property type="project" value="UniProtKB-SubCell"/>
</dbReference>
<dbReference type="GO" id="GO:0005882">
    <property type="term" value="C:intermediate filament"/>
    <property type="evidence" value="ECO:0007669"/>
    <property type="project" value="UniProtKB-KW"/>
</dbReference>
<dbReference type="GO" id="GO:0005198">
    <property type="term" value="F:structural molecule activity"/>
    <property type="evidence" value="ECO:0007669"/>
    <property type="project" value="InterPro"/>
</dbReference>
<dbReference type="FunFam" id="1.20.5.1160:FF:000002">
    <property type="entry name" value="Type I keratin 10"/>
    <property type="match status" value="1"/>
</dbReference>
<dbReference type="FunFam" id="1.20.5.170:FF:000002">
    <property type="entry name" value="Type I keratin KA11"/>
    <property type="match status" value="1"/>
</dbReference>
<dbReference type="FunFam" id="1.20.5.500:FF:000001">
    <property type="entry name" value="Type II keratin 23"/>
    <property type="match status" value="1"/>
</dbReference>
<dbReference type="Gene3D" id="1.20.5.170">
    <property type="match status" value="1"/>
</dbReference>
<dbReference type="Gene3D" id="1.20.5.500">
    <property type="entry name" value="Single helix bin"/>
    <property type="match status" value="1"/>
</dbReference>
<dbReference type="Gene3D" id="1.20.5.1160">
    <property type="entry name" value="Vasodilator-stimulated phosphoprotein"/>
    <property type="match status" value="1"/>
</dbReference>
<dbReference type="InterPro" id="IPR018039">
    <property type="entry name" value="IF_conserved"/>
</dbReference>
<dbReference type="InterPro" id="IPR039008">
    <property type="entry name" value="IF_rod_dom"/>
</dbReference>
<dbReference type="InterPro" id="IPR002957">
    <property type="entry name" value="Keratin_I"/>
</dbReference>
<dbReference type="PANTHER" id="PTHR23239">
    <property type="entry name" value="INTERMEDIATE FILAMENT"/>
    <property type="match status" value="1"/>
</dbReference>
<dbReference type="PANTHER" id="PTHR23239:SF184">
    <property type="entry name" value="KERATIN, TYPE I CYTOSKELETAL 42"/>
    <property type="match status" value="1"/>
</dbReference>
<dbReference type="Pfam" id="PF00038">
    <property type="entry name" value="Filament"/>
    <property type="match status" value="1"/>
</dbReference>
<dbReference type="PRINTS" id="PR01248">
    <property type="entry name" value="TYPE1KERATIN"/>
</dbReference>
<dbReference type="SMART" id="SM01391">
    <property type="entry name" value="Filament"/>
    <property type="match status" value="1"/>
</dbReference>
<dbReference type="SUPFAM" id="SSF64593">
    <property type="entry name" value="Intermediate filament protein, coiled coil region"/>
    <property type="match status" value="2"/>
</dbReference>
<dbReference type="SUPFAM" id="SSF46579">
    <property type="entry name" value="Prefoldin"/>
    <property type="match status" value="1"/>
</dbReference>
<dbReference type="PROSITE" id="PS00226">
    <property type="entry name" value="IF_ROD_1"/>
    <property type="match status" value="1"/>
</dbReference>
<dbReference type="PROSITE" id="PS51842">
    <property type="entry name" value="IF_ROD_2"/>
    <property type="match status" value="1"/>
</dbReference>
<comment type="subunit">
    <text evidence="3 4">Heterodimer of a type I and a type II keratin. Colocalizes with KRT8/KRT18 filament network.</text>
</comment>
<comment type="subcellular location">
    <subcellularLocation>
        <location evidence="3">Cytoplasm</location>
    </subcellularLocation>
</comment>
<comment type="tissue specificity">
    <text evidence="3">Expressed in nail matrix and nail bed epithelium (at protein level). Also expressed in tongue and digits with weak expression in vibrissae and in both filiform and fungiform papillae of oral mucosa.</text>
</comment>
<comment type="miscellaneous">
    <text evidence="4">There are two types of cytoskeletal and microfibrillar keratin: I (acidic; 40-55 kDa) and II (neutral to basic; 56-70 kDa).</text>
</comment>
<comment type="similarity">
    <text evidence="2">Belongs to the intermediate filament family.</text>
</comment>